<evidence type="ECO:0000250" key="1">
    <source>
        <dbReference type="UniProtKB" id="P03685"/>
    </source>
</evidence>
<evidence type="ECO:0000305" key="2"/>
<dbReference type="EMBL" id="X99260">
    <property type="protein sequence ID" value="CAA67653.1"/>
    <property type="molecule type" value="Genomic_DNA"/>
</dbReference>
<dbReference type="RefSeq" id="NP_690639.1">
    <property type="nucleotide sequence ID" value="NC_004165.1"/>
</dbReference>
<dbReference type="SMR" id="Q37886"/>
<dbReference type="KEGG" id="vg:955359"/>
<dbReference type="Proteomes" id="UP000000971">
    <property type="component" value="Segment"/>
</dbReference>
<dbReference type="GO" id="GO:0003677">
    <property type="term" value="F:DNA binding"/>
    <property type="evidence" value="ECO:0007669"/>
    <property type="project" value="UniProtKB-KW"/>
</dbReference>
<dbReference type="GO" id="GO:0030261">
    <property type="term" value="P:chromosome condensation"/>
    <property type="evidence" value="ECO:0007669"/>
    <property type="project" value="UniProtKB-KW"/>
</dbReference>
<dbReference type="GO" id="GO:0006260">
    <property type="term" value="P:DNA replication"/>
    <property type="evidence" value="ECO:0007669"/>
    <property type="project" value="UniProtKB-KW"/>
</dbReference>
<dbReference type="GO" id="GO:0039693">
    <property type="term" value="P:viral DNA genome replication"/>
    <property type="evidence" value="ECO:0007669"/>
    <property type="project" value="UniProtKB-KW"/>
</dbReference>
<dbReference type="InterPro" id="IPR035188">
    <property type="entry name" value="Histone-like_p6"/>
</dbReference>
<dbReference type="Pfam" id="PF17548">
    <property type="entry name" value="p6"/>
    <property type="match status" value="1"/>
</dbReference>
<proteinExistence type="inferred from homology"/>
<protein>
    <recommendedName>
        <fullName evidence="1">Histone-like protein p6</fullName>
    </recommendedName>
    <alternativeName>
        <fullName evidence="1">Double-stranded DNA-binding protein</fullName>
    </alternativeName>
    <alternativeName>
        <fullName evidence="1">Double-stranded DNA-binding protein p6</fullName>
    </alternativeName>
    <alternativeName>
        <fullName evidence="1">Gene product 6</fullName>
        <shortName evidence="1">gp6</shortName>
    </alternativeName>
    <alternativeName>
        <fullName evidence="1">Histone-like binding protein</fullName>
    </alternativeName>
    <alternativeName>
        <fullName evidence="1">Nucleoid-associated protein p6</fullName>
    </alternativeName>
    <alternativeName>
        <fullName evidence="1">Protein p6</fullName>
    </alternativeName>
</protein>
<name>NP_BPB03</name>
<gene>
    <name type="primary">6</name>
</gene>
<reference key="1">
    <citation type="journal article" date="1997" name="Gene">
        <title>Bacteriophage B103: complete DNA sequence of its genome and relationship to other Bacillus phages.</title>
        <authorList>
            <person name="Pecenkova T."/>
            <person name="Benes V."/>
            <person name="Paces J."/>
            <person name="Vlcek C."/>
            <person name="Paces V."/>
        </authorList>
    </citation>
    <scope>NUCLEOTIDE SEQUENCE [LARGE SCALE GENOMIC DNA]</scope>
</reference>
<sequence>MRKMMQREVTYTTAQLARMKMEDGQVTAEVLEPVTLIGNLSVEQAQREINKRPEFKENPAQVVGVEPNTQLYELPLDVFLEHATVKERPAAKEEVAEVQA</sequence>
<organism>
    <name type="scientific">Bacillus phage B103</name>
    <name type="common">Bacteriophage B103</name>
    <dbReference type="NCBI Taxonomy" id="2994042"/>
    <lineage>
        <taxon>Viruses</taxon>
        <taxon>Duplodnaviria</taxon>
        <taxon>Heunggongvirae</taxon>
        <taxon>Uroviricota</taxon>
        <taxon>Caudoviricetes</taxon>
        <taxon>Salasmaviridae</taxon>
        <taxon>Picovirinae</taxon>
        <taxon>Beecentumtrevirus</taxon>
        <taxon>Beecentumtrevirus B103</taxon>
    </lineage>
</organism>
<accession>Q37886</accession>
<comment type="function">
    <text evidence="1">Histone-like nucleoprotein that binds to the viral dsDNA and responsible for wrapping and compacting the viral DNA about 4-fold. Forms a nucleoprotein complex in which the DNA adopts a right-handed toroidal conformation winding around a protein core. Binds ito most, if not all, the viral genome, although with different affinity, the highest one corresponding to the genome ends. The formation of the nucleoprotein complex at the genome ends, activates the initiation of viral DNA replication. The binding of p6 would recruit the complex formed by the TP and the DNA polymerase to the origin. Protein p6 also represses early transcription from promoter C2, and, together with protein p4, represses transcription from promoters A2b and A2c and activates late transcription from promoter A3. Protein p6 is therefore involved in the early to late transcription switch. The formation of the nucleoprotein complex at the right end of the phage genome where the early promoter C2 is located affects local topology, which may contribute to the promoter repression.</text>
</comment>
<comment type="subunit">
    <text evidence="1">Homodimer. Homomultimer. Binds to double-stranded DNA giving rise to multimeric nucleoprotein complexes. Binding specificity for the viral DNA is based on supercoiling, the viral genome having a negative superhelicity lower than that of plasmid DNA. Interacts with the DNA replication protein p17; this interaction optimizes the binding of protein p6 at the viral DNA ends, thus favoring the initiation of replication.</text>
</comment>
<comment type="domain">
    <text evidence="1">The N-terminus is involved in DNA-binding.</text>
</comment>
<comment type="similarity">
    <text evidence="2">Belongs to the phi29likevirus histone-like protein p6 family.</text>
</comment>
<feature type="chain" id="PRO_0000106567" description="Histone-like protein p6">
    <location>
        <begin position="1"/>
        <end position="100"/>
    </location>
</feature>
<feature type="DNA-binding region" evidence="1">
    <location>
        <begin position="1"/>
        <end position="19"/>
    </location>
</feature>
<keyword id="KW-0226">DNA condensation</keyword>
<keyword id="KW-0235">DNA replication</keyword>
<keyword id="KW-0238">DNA-binding</keyword>
<keyword id="KW-0244">Early protein</keyword>
<keyword id="KW-0678">Repressor</keyword>
<keyword id="KW-0804">Transcription</keyword>
<keyword id="KW-0805">Transcription regulation</keyword>
<keyword id="KW-1194">Viral DNA replication</keyword>
<organismHost>
    <name type="scientific">Bacillus subtilis</name>
    <dbReference type="NCBI Taxonomy" id="1423"/>
</organismHost>